<reference key="1">
    <citation type="journal article" date="2019" name="Angew. Chem. Int. Ed.">
        <title>Unprecedented [5.5.5.6]dioxafenestrane ring construction in fungal insecticidal sesquiterpene biosynthesis.</title>
        <authorList>
            <person name="Zeng H."/>
            <person name="Yin G."/>
            <person name="Wei Q."/>
            <person name="Li D."/>
            <person name="Wang Y."/>
            <person name="Hu Y."/>
            <person name="Hu C."/>
            <person name="Zou Y."/>
        </authorList>
    </citation>
    <scope>NUCLEOTIDE SEQUENCE [GENOMIC DNA]</scope>
    <scope>FUNCTION</scope>
    <scope>DISRUPTION PHENOTYPE</scope>
    <scope>CATALYTIC ACTIVITY</scope>
    <scope>PATHWAY</scope>
    <source>
        <strain>NRRL 35584</strain>
    </source>
</reference>
<feature type="chain" id="PRO_0000460297" description="Cytochrome P450 monooxygenase peniB">
    <location>
        <begin position="1"/>
        <end position="531"/>
    </location>
</feature>
<feature type="transmembrane region" description="Helical" evidence="2">
    <location>
        <begin position="30"/>
        <end position="48"/>
    </location>
</feature>
<feature type="binding site" description="axial binding residue" evidence="1">
    <location>
        <position position="445"/>
    </location>
    <ligand>
        <name>heme</name>
        <dbReference type="ChEBI" id="CHEBI:30413"/>
    </ligand>
    <ligandPart>
        <name>Fe</name>
        <dbReference type="ChEBI" id="CHEBI:18248"/>
    </ligandPart>
</feature>
<comment type="function">
    <text evidence="3">Cytochrome P450 monooxygenase; part of the gene cluster that mediates the biosynthesis of penifulvin A, a potent insecticidal sesquiterpene that features a [5.5.5.6]dioxafenestrane ring (PubMed:30908782). Within the pathway, peniB catalyzes the multi-step oxidation of silphinene to synthesize gamma-lactone-2-keto[5.5.5.5]fenestrane, including oxidation of the C15 methylgroup in silphinene to form silphinene-15-oic acid, activationof the C1-C2 double bond to form the gamma-lactone-2-hydroxy[5.5.5.5]fenestrane, and dehydrogenation of the hydroxy group at C2 of gamma-lactone-2-hydroxy[5.5.5.5]fenestrane to generate gamma-lactone-2-keto[5.5.5.5]fenestrane (PubMed:30908782). The first step of the pathway is performed by the sesquiterpene cyclase peniA that generates the angular triquinane scaffold silphinene via cyclization of the linear farnesyl pyrophosphate (FPP). The cytochrome P450 monooxygenase peniB and the flavin-dependent monooxygenase peniC then catalyze a series of oxidation reactions to transform silphinene into penifulvin A (PubMed:30908782).</text>
</comment>
<comment type="catalytic activity">
    <reaction evidence="3">
        <text>silphinene-15-oate + 2 reduced [NADPH--hemoprotein reductase] + 2 O2 = gamma-lactone-2-keto[5.5.5.5]fenestrane + 2 oxidized [NADPH--hemoprotein reductase] + 3 H2O + H(+)</text>
        <dbReference type="Rhea" id="RHEA:78659"/>
        <dbReference type="Rhea" id="RHEA-COMP:11964"/>
        <dbReference type="Rhea" id="RHEA-COMP:11965"/>
        <dbReference type="ChEBI" id="CHEBI:15377"/>
        <dbReference type="ChEBI" id="CHEBI:15378"/>
        <dbReference type="ChEBI" id="CHEBI:15379"/>
        <dbReference type="ChEBI" id="CHEBI:57618"/>
        <dbReference type="ChEBI" id="CHEBI:58210"/>
        <dbReference type="ChEBI" id="CHEBI:229524"/>
        <dbReference type="ChEBI" id="CHEBI:229528"/>
    </reaction>
    <physiologicalReaction direction="left-to-right" evidence="3">
        <dbReference type="Rhea" id="RHEA:78660"/>
    </physiologicalReaction>
</comment>
<comment type="cofactor">
    <cofactor evidence="1">
        <name>heme</name>
        <dbReference type="ChEBI" id="CHEBI:30413"/>
    </cofactor>
</comment>
<comment type="pathway">
    <text evidence="3">Secondary metabolite biosynthesis; terpenoid biosynthesis.</text>
</comment>
<comment type="subcellular location">
    <subcellularLocation>
        <location evidence="2">Membrane</location>
        <topology evidence="2">Single-pass membrane protein</topology>
    </subcellularLocation>
</comment>
<comment type="disruption phenotype">
    <text evidence="3">Abolishes the production of penifulvin A.</text>
</comment>
<comment type="similarity">
    <text evidence="5">Belongs to the cytochrome P450 family.</text>
</comment>
<evidence type="ECO:0000250" key="1">
    <source>
        <dbReference type="UniProtKB" id="P04798"/>
    </source>
</evidence>
<evidence type="ECO:0000255" key="2"/>
<evidence type="ECO:0000269" key="3">
    <source>
    </source>
</evidence>
<evidence type="ECO:0000303" key="4">
    <source>
    </source>
</evidence>
<evidence type="ECO:0000305" key="5"/>
<keyword id="KW-0349">Heme</keyword>
<keyword id="KW-0408">Iron</keyword>
<keyword id="KW-0472">Membrane</keyword>
<keyword id="KW-0479">Metal-binding</keyword>
<keyword id="KW-0503">Monooxygenase</keyword>
<keyword id="KW-0560">Oxidoreductase</keyword>
<keyword id="KW-0812">Transmembrane</keyword>
<keyword id="KW-1133">Transmembrane helix</keyword>
<accession>A0A516F411</accession>
<sequence>MDTVQSLINITLPQPEIEAPAKLEYDRTRILSIAAVVFLGYLLLRPLFDKRLPLPPAPTRLPLLGNLHQFPASNLWGTYKKWHNQYGPIMGLKYGQRTVISLGSHEVAKDLLEKRSNIYSSRPNFVVAKAFSNDANSALIAYDERWKTHHSLLSTFMNARMAAKYQFLQNIESKQALHDLMSVQGTEWMQVFHRYTISVTFTLAYGERIPELYDERILFIDELTETISSNVEKPKNLIADCFPTISILPSALMRWKKQGKVYHDSAMKFFLDNHAKALQKPGWNWVKESQTSEDANKLDREEVIYLIGVLIEAGGSTMKTFEFFVMASILFPEKVRLVQEEVDRVVGADRLPTWDDSPNLPYLHAFIREVQRWRPIFPFGVPHSNLKEDVYNGFRIPKDSVVLANHWAMDSDHKVFENADDFVPERWLEDSKLPFLAFGYGKRVCPGQHIAKRSLFIIISRTLWAYNITHAYEKGKKVEIDPHAIVQNILAGPVPFKGTFTPRDADRYRILEEEFSNIGQDEANIWDVCKP</sequence>
<gene>
    <name evidence="4" type="primary">peniB</name>
</gene>
<proteinExistence type="evidence at protein level"/>
<dbReference type="EC" id="1.-.-.-" evidence="3"/>
<dbReference type="EMBL" id="MK692947">
    <property type="protein sequence ID" value="QDO73503.1"/>
    <property type="molecule type" value="Genomic_DNA"/>
</dbReference>
<dbReference type="SMR" id="A0A516F411"/>
<dbReference type="UniPathway" id="UPA00213"/>
<dbReference type="GO" id="GO:0016020">
    <property type="term" value="C:membrane"/>
    <property type="evidence" value="ECO:0007669"/>
    <property type="project" value="UniProtKB-SubCell"/>
</dbReference>
<dbReference type="GO" id="GO:0020037">
    <property type="term" value="F:heme binding"/>
    <property type="evidence" value="ECO:0007669"/>
    <property type="project" value="InterPro"/>
</dbReference>
<dbReference type="GO" id="GO:0005506">
    <property type="term" value="F:iron ion binding"/>
    <property type="evidence" value="ECO:0007669"/>
    <property type="project" value="InterPro"/>
</dbReference>
<dbReference type="GO" id="GO:0004497">
    <property type="term" value="F:monooxygenase activity"/>
    <property type="evidence" value="ECO:0007669"/>
    <property type="project" value="UniProtKB-KW"/>
</dbReference>
<dbReference type="GO" id="GO:0016705">
    <property type="term" value="F:oxidoreductase activity, acting on paired donors, with incorporation or reduction of molecular oxygen"/>
    <property type="evidence" value="ECO:0007669"/>
    <property type="project" value="InterPro"/>
</dbReference>
<dbReference type="GO" id="GO:0043386">
    <property type="term" value="P:mycotoxin biosynthetic process"/>
    <property type="evidence" value="ECO:0007669"/>
    <property type="project" value="UniProtKB-ARBA"/>
</dbReference>
<dbReference type="CDD" id="cd11065">
    <property type="entry name" value="CYP64-like"/>
    <property type="match status" value="1"/>
</dbReference>
<dbReference type="Gene3D" id="1.10.630.10">
    <property type="entry name" value="Cytochrome P450"/>
    <property type="match status" value="1"/>
</dbReference>
<dbReference type="InterPro" id="IPR001128">
    <property type="entry name" value="Cyt_P450"/>
</dbReference>
<dbReference type="InterPro" id="IPR017972">
    <property type="entry name" value="Cyt_P450_CS"/>
</dbReference>
<dbReference type="InterPro" id="IPR002401">
    <property type="entry name" value="Cyt_P450_E_grp-I"/>
</dbReference>
<dbReference type="InterPro" id="IPR036396">
    <property type="entry name" value="Cyt_P450_sf"/>
</dbReference>
<dbReference type="InterPro" id="IPR050364">
    <property type="entry name" value="Cytochrome_P450_fung"/>
</dbReference>
<dbReference type="PANTHER" id="PTHR46300:SF1">
    <property type="entry name" value="P450, PUTATIVE (EUROFUNG)-RELATED"/>
    <property type="match status" value="1"/>
</dbReference>
<dbReference type="PANTHER" id="PTHR46300">
    <property type="entry name" value="P450, PUTATIVE (EUROFUNG)-RELATED-RELATED"/>
    <property type="match status" value="1"/>
</dbReference>
<dbReference type="Pfam" id="PF00067">
    <property type="entry name" value="p450"/>
    <property type="match status" value="1"/>
</dbReference>
<dbReference type="PRINTS" id="PR00463">
    <property type="entry name" value="EP450I"/>
</dbReference>
<dbReference type="PRINTS" id="PR00385">
    <property type="entry name" value="P450"/>
</dbReference>
<dbReference type="SUPFAM" id="SSF48264">
    <property type="entry name" value="Cytochrome P450"/>
    <property type="match status" value="1"/>
</dbReference>
<dbReference type="PROSITE" id="PS00086">
    <property type="entry name" value="CYTOCHROME_P450"/>
    <property type="match status" value="1"/>
</dbReference>
<protein>
    <recommendedName>
        <fullName evidence="4">Cytochrome P450 monooxygenase peniB</fullName>
        <ecNumber evidence="3">1.-.-.-</ecNumber>
    </recommendedName>
    <alternativeName>
        <fullName evidence="4">Penifulvin A biosynthesis cluster protein B</fullName>
    </alternativeName>
</protein>
<name>PENIB_PENPA</name>
<organism>
    <name type="scientific">Penicillium patulum</name>
    <name type="common">Penicillium griseofulvum</name>
    <dbReference type="NCBI Taxonomy" id="5078"/>
    <lineage>
        <taxon>Eukaryota</taxon>
        <taxon>Fungi</taxon>
        <taxon>Dikarya</taxon>
        <taxon>Ascomycota</taxon>
        <taxon>Pezizomycotina</taxon>
        <taxon>Eurotiomycetes</taxon>
        <taxon>Eurotiomycetidae</taxon>
        <taxon>Eurotiales</taxon>
        <taxon>Aspergillaceae</taxon>
        <taxon>Penicillium</taxon>
    </lineage>
</organism>